<protein>
    <recommendedName>
        <fullName evidence="1">3-hydroxyacyl-[acyl-carrier-protein] dehydratase FabZ</fullName>
        <ecNumber evidence="1">4.2.1.59</ecNumber>
    </recommendedName>
    <alternativeName>
        <fullName evidence="1">(3R)-hydroxymyristoyl-[acyl-carrier-protein] dehydratase</fullName>
        <shortName evidence="1">(3R)-hydroxymyristoyl-ACP dehydrase</shortName>
    </alternativeName>
    <alternativeName>
        <fullName evidence="1">Beta-hydroxyacyl-ACP dehydratase</fullName>
    </alternativeName>
</protein>
<dbReference type="EC" id="4.2.1.59" evidence="1"/>
<dbReference type="EMBL" id="CP000923">
    <property type="protein sequence ID" value="ABY91435.1"/>
    <property type="molecule type" value="Genomic_DNA"/>
</dbReference>
<dbReference type="RefSeq" id="WP_009051976.1">
    <property type="nucleotide sequence ID" value="NC_010320.1"/>
</dbReference>
<dbReference type="SMR" id="B0K1H6"/>
<dbReference type="KEGG" id="tex:Teth514_0113"/>
<dbReference type="HOGENOM" id="CLU_078912_3_0_9"/>
<dbReference type="Proteomes" id="UP000002155">
    <property type="component" value="Chromosome"/>
</dbReference>
<dbReference type="GO" id="GO:0005737">
    <property type="term" value="C:cytoplasm"/>
    <property type="evidence" value="ECO:0007669"/>
    <property type="project" value="UniProtKB-SubCell"/>
</dbReference>
<dbReference type="GO" id="GO:0016020">
    <property type="term" value="C:membrane"/>
    <property type="evidence" value="ECO:0007669"/>
    <property type="project" value="GOC"/>
</dbReference>
<dbReference type="GO" id="GO:0019171">
    <property type="term" value="F:(3R)-hydroxyacyl-[acyl-carrier-protein] dehydratase activity"/>
    <property type="evidence" value="ECO:0007669"/>
    <property type="project" value="UniProtKB-EC"/>
</dbReference>
<dbReference type="GO" id="GO:0006633">
    <property type="term" value="P:fatty acid biosynthetic process"/>
    <property type="evidence" value="ECO:0007669"/>
    <property type="project" value="UniProtKB-UniRule"/>
</dbReference>
<dbReference type="GO" id="GO:0009245">
    <property type="term" value="P:lipid A biosynthetic process"/>
    <property type="evidence" value="ECO:0007669"/>
    <property type="project" value="UniProtKB-UniRule"/>
</dbReference>
<dbReference type="CDD" id="cd01288">
    <property type="entry name" value="FabZ"/>
    <property type="match status" value="1"/>
</dbReference>
<dbReference type="FunFam" id="3.10.129.10:FF:000001">
    <property type="entry name" value="3-hydroxyacyl-[acyl-carrier-protein] dehydratase FabZ"/>
    <property type="match status" value="1"/>
</dbReference>
<dbReference type="Gene3D" id="3.10.129.10">
    <property type="entry name" value="Hotdog Thioesterase"/>
    <property type="match status" value="1"/>
</dbReference>
<dbReference type="HAMAP" id="MF_00406">
    <property type="entry name" value="FabZ"/>
    <property type="match status" value="1"/>
</dbReference>
<dbReference type="InterPro" id="IPR013114">
    <property type="entry name" value="FabA_FabZ"/>
</dbReference>
<dbReference type="InterPro" id="IPR010084">
    <property type="entry name" value="FabZ"/>
</dbReference>
<dbReference type="InterPro" id="IPR029069">
    <property type="entry name" value="HotDog_dom_sf"/>
</dbReference>
<dbReference type="NCBIfam" id="TIGR01750">
    <property type="entry name" value="fabZ"/>
    <property type="match status" value="1"/>
</dbReference>
<dbReference type="NCBIfam" id="NF000582">
    <property type="entry name" value="PRK00006.1"/>
    <property type="match status" value="1"/>
</dbReference>
<dbReference type="PANTHER" id="PTHR30272">
    <property type="entry name" value="3-HYDROXYACYL-[ACYL-CARRIER-PROTEIN] DEHYDRATASE"/>
    <property type="match status" value="1"/>
</dbReference>
<dbReference type="PANTHER" id="PTHR30272:SF1">
    <property type="entry name" value="3-HYDROXYACYL-[ACYL-CARRIER-PROTEIN] DEHYDRATASE"/>
    <property type="match status" value="1"/>
</dbReference>
<dbReference type="Pfam" id="PF07977">
    <property type="entry name" value="FabA"/>
    <property type="match status" value="1"/>
</dbReference>
<dbReference type="SUPFAM" id="SSF54637">
    <property type="entry name" value="Thioesterase/thiol ester dehydrase-isomerase"/>
    <property type="match status" value="1"/>
</dbReference>
<keyword id="KW-0963">Cytoplasm</keyword>
<keyword id="KW-0441">Lipid A biosynthesis</keyword>
<keyword id="KW-0444">Lipid biosynthesis</keyword>
<keyword id="KW-0443">Lipid metabolism</keyword>
<keyword id="KW-0456">Lyase</keyword>
<comment type="function">
    <text evidence="1">Involved in unsaturated fatty acids biosynthesis. Catalyzes the dehydration of short chain beta-hydroxyacyl-ACPs and long chain saturated and unsaturated beta-hydroxyacyl-ACPs.</text>
</comment>
<comment type="catalytic activity">
    <reaction evidence="1">
        <text>a (3R)-hydroxyacyl-[ACP] = a (2E)-enoyl-[ACP] + H2O</text>
        <dbReference type="Rhea" id="RHEA:13097"/>
        <dbReference type="Rhea" id="RHEA-COMP:9925"/>
        <dbReference type="Rhea" id="RHEA-COMP:9945"/>
        <dbReference type="ChEBI" id="CHEBI:15377"/>
        <dbReference type="ChEBI" id="CHEBI:78784"/>
        <dbReference type="ChEBI" id="CHEBI:78827"/>
        <dbReference type="EC" id="4.2.1.59"/>
    </reaction>
</comment>
<comment type="subcellular location">
    <subcellularLocation>
        <location evidence="1">Cytoplasm</location>
    </subcellularLocation>
</comment>
<comment type="similarity">
    <text evidence="1">Belongs to the thioester dehydratase family. FabZ subfamily.</text>
</comment>
<reference key="1">
    <citation type="submission" date="2008-01" db="EMBL/GenBank/DDBJ databases">
        <title>Complete sequence of Thermoanaerobacter sp. X514.</title>
        <authorList>
            <consortium name="US DOE Joint Genome Institute"/>
            <person name="Copeland A."/>
            <person name="Lucas S."/>
            <person name="Lapidus A."/>
            <person name="Barry K."/>
            <person name="Glavina del Rio T."/>
            <person name="Dalin E."/>
            <person name="Tice H."/>
            <person name="Pitluck S."/>
            <person name="Bruce D."/>
            <person name="Goodwin L."/>
            <person name="Saunders E."/>
            <person name="Brettin T."/>
            <person name="Detter J.C."/>
            <person name="Han C."/>
            <person name="Schmutz J."/>
            <person name="Larimer F."/>
            <person name="Land M."/>
            <person name="Hauser L."/>
            <person name="Kyrpides N."/>
            <person name="Kim E."/>
            <person name="Hemme C."/>
            <person name="Fields M.W."/>
            <person name="He Z."/>
            <person name="Zhou J."/>
            <person name="Richardson P."/>
        </authorList>
    </citation>
    <scope>NUCLEOTIDE SEQUENCE [LARGE SCALE GENOMIC DNA]</scope>
    <source>
        <strain>X514</strain>
    </source>
</reference>
<feature type="chain" id="PRO_1000123673" description="3-hydroxyacyl-[acyl-carrier-protein] dehydratase FabZ">
    <location>
        <begin position="1"/>
        <end position="142"/>
    </location>
</feature>
<feature type="active site" evidence="1">
    <location>
        <position position="47"/>
    </location>
</feature>
<evidence type="ECO:0000255" key="1">
    <source>
        <dbReference type="HAMAP-Rule" id="MF_00406"/>
    </source>
</evidence>
<name>FABZ_THEPX</name>
<accession>B0K1H6</accession>
<organism>
    <name type="scientific">Thermoanaerobacter sp. (strain X514)</name>
    <dbReference type="NCBI Taxonomy" id="399726"/>
    <lineage>
        <taxon>Bacteria</taxon>
        <taxon>Bacillati</taxon>
        <taxon>Bacillota</taxon>
        <taxon>Clostridia</taxon>
        <taxon>Thermoanaerobacterales</taxon>
        <taxon>Thermoanaerobacteraceae</taxon>
        <taxon>Thermoanaerobacter</taxon>
    </lineage>
</organism>
<gene>
    <name evidence="1" type="primary">fabZ</name>
    <name type="ordered locus">Teth514_0113</name>
</gene>
<proteinExistence type="inferred from homology"/>
<sequence length="142" mass="15604">MENKGIRKILPHRYPFLLVDRIIEIEEGKKAVGIKNVTANEPFFQGHFPDNPIMPGVLIVEALAQVAGIAVMNIEEFKGKLGLFTGIDKCRFKKVVRPGDQLVLEVLIDSIKMGLVKAKGVAKVGDEVAATAELMFIMTEEG</sequence>